<evidence type="ECO:0000255" key="1">
    <source>
        <dbReference type="HAMAP-Rule" id="MF_00014"/>
    </source>
</evidence>
<comment type="function">
    <text evidence="1">An accessory protein needed during the final step in the assembly of 30S ribosomal subunit, possibly for assembly of the head region. Essential for efficient processing of 16S rRNA. May be needed both before and after RbfA during the maturation of 16S rRNA. It has affinity for free ribosomal 30S subunits but not for 70S ribosomes.</text>
</comment>
<comment type="subunit">
    <text evidence="1">Binds ribosomal protein uS19.</text>
</comment>
<comment type="subcellular location">
    <subcellularLocation>
        <location evidence="1">Cytoplasm</location>
    </subcellularLocation>
</comment>
<comment type="domain">
    <text evidence="1">The PRC barrel domain binds ribosomal protein uS19.</text>
</comment>
<comment type="similarity">
    <text evidence="1">Belongs to the RimM family.</text>
</comment>
<sequence>MSSKQEPVVLGKLGSSHGIKGWLKITTYTDSVEGIFDYSPWLIKEQGEWREVKVLQWRFQGKAVVACLEGVETREHAQMLTNCEIAVTPEQMDTLPEDEFYWRDLIGCEVMNTKGYNMGKVQEIVETGSNDVLLVKANAKDGFGKAERMIPFVTEQFIIEVNLTEKQITVDWDPDF</sequence>
<gene>
    <name evidence="1" type="primary">rimM</name>
    <name type="ordered locus">Ssed_1160</name>
</gene>
<organism>
    <name type="scientific">Shewanella sediminis (strain HAW-EB3)</name>
    <dbReference type="NCBI Taxonomy" id="425104"/>
    <lineage>
        <taxon>Bacteria</taxon>
        <taxon>Pseudomonadati</taxon>
        <taxon>Pseudomonadota</taxon>
        <taxon>Gammaproteobacteria</taxon>
        <taxon>Alteromonadales</taxon>
        <taxon>Shewanellaceae</taxon>
        <taxon>Shewanella</taxon>
    </lineage>
</organism>
<accession>A8FSE8</accession>
<reference key="1">
    <citation type="submission" date="2007-08" db="EMBL/GenBank/DDBJ databases">
        <title>Complete sequence of Shewanella sediminis HAW-EB3.</title>
        <authorList>
            <consortium name="US DOE Joint Genome Institute"/>
            <person name="Copeland A."/>
            <person name="Lucas S."/>
            <person name="Lapidus A."/>
            <person name="Barry K."/>
            <person name="Glavina del Rio T."/>
            <person name="Dalin E."/>
            <person name="Tice H."/>
            <person name="Pitluck S."/>
            <person name="Chertkov O."/>
            <person name="Brettin T."/>
            <person name="Bruce D."/>
            <person name="Detter J.C."/>
            <person name="Han C."/>
            <person name="Schmutz J."/>
            <person name="Larimer F."/>
            <person name="Land M."/>
            <person name="Hauser L."/>
            <person name="Kyrpides N."/>
            <person name="Kim E."/>
            <person name="Zhao J.-S."/>
            <person name="Richardson P."/>
        </authorList>
    </citation>
    <scope>NUCLEOTIDE SEQUENCE [LARGE SCALE GENOMIC DNA]</scope>
    <source>
        <strain>HAW-EB3</strain>
    </source>
</reference>
<keyword id="KW-0143">Chaperone</keyword>
<keyword id="KW-0963">Cytoplasm</keyword>
<keyword id="KW-1185">Reference proteome</keyword>
<keyword id="KW-0690">Ribosome biogenesis</keyword>
<keyword id="KW-0698">rRNA processing</keyword>
<dbReference type="EMBL" id="CP000821">
    <property type="protein sequence ID" value="ABV35771.1"/>
    <property type="molecule type" value="Genomic_DNA"/>
</dbReference>
<dbReference type="RefSeq" id="WP_012141507.1">
    <property type="nucleotide sequence ID" value="NC_009831.1"/>
</dbReference>
<dbReference type="SMR" id="A8FSE8"/>
<dbReference type="STRING" id="425104.Ssed_1160"/>
<dbReference type="KEGG" id="sse:Ssed_1160"/>
<dbReference type="eggNOG" id="COG0806">
    <property type="taxonomic scope" value="Bacteria"/>
</dbReference>
<dbReference type="HOGENOM" id="CLU_077636_1_0_6"/>
<dbReference type="OrthoDB" id="9783509at2"/>
<dbReference type="Proteomes" id="UP000002015">
    <property type="component" value="Chromosome"/>
</dbReference>
<dbReference type="GO" id="GO:0005737">
    <property type="term" value="C:cytoplasm"/>
    <property type="evidence" value="ECO:0007669"/>
    <property type="project" value="UniProtKB-SubCell"/>
</dbReference>
<dbReference type="GO" id="GO:0005840">
    <property type="term" value="C:ribosome"/>
    <property type="evidence" value="ECO:0007669"/>
    <property type="project" value="InterPro"/>
</dbReference>
<dbReference type="GO" id="GO:0043022">
    <property type="term" value="F:ribosome binding"/>
    <property type="evidence" value="ECO:0007669"/>
    <property type="project" value="InterPro"/>
</dbReference>
<dbReference type="GO" id="GO:0042274">
    <property type="term" value="P:ribosomal small subunit biogenesis"/>
    <property type="evidence" value="ECO:0007669"/>
    <property type="project" value="UniProtKB-UniRule"/>
</dbReference>
<dbReference type="GO" id="GO:0006364">
    <property type="term" value="P:rRNA processing"/>
    <property type="evidence" value="ECO:0007669"/>
    <property type="project" value="UniProtKB-UniRule"/>
</dbReference>
<dbReference type="Gene3D" id="2.30.30.240">
    <property type="entry name" value="PRC-barrel domain"/>
    <property type="match status" value="1"/>
</dbReference>
<dbReference type="Gene3D" id="2.40.30.60">
    <property type="entry name" value="RimM"/>
    <property type="match status" value="1"/>
</dbReference>
<dbReference type="HAMAP" id="MF_00014">
    <property type="entry name" value="Ribosome_mat_RimM"/>
    <property type="match status" value="1"/>
</dbReference>
<dbReference type="InterPro" id="IPR011033">
    <property type="entry name" value="PRC_barrel-like_sf"/>
</dbReference>
<dbReference type="InterPro" id="IPR056792">
    <property type="entry name" value="PRC_RimM"/>
</dbReference>
<dbReference type="InterPro" id="IPR011961">
    <property type="entry name" value="RimM"/>
</dbReference>
<dbReference type="InterPro" id="IPR002676">
    <property type="entry name" value="RimM_N"/>
</dbReference>
<dbReference type="InterPro" id="IPR036976">
    <property type="entry name" value="RimM_N_sf"/>
</dbReference>
<dbReference type="InterPro" id="IPR009000">
    <property type="entry name" value="Transl_B-barrel_sf"/>
</dbReference>
<dbReference type="NCBIfam" id="TIGR02273">
    <property type="entry name" value="16S_RimM"/>
    <property type="match status" value="1"/>
</dbReference>
<dbReference type="PANTHER" id="PTHR33692">
    <property type="entry name" value="RIBOSOME MATURATION FACTOR RIMM"/>
    <property type="match status" value="1"/>
</dbReference>
<dbReference type="PANTHER" id="PTHR33692:SF1">
    <property type="entry name" value="RIBOSOME MATURATION FACTOR RIMM"/>
    <property type="match status" value="1"/>
</dbReference>
<dbReference type="Pfam" id="PF24986">
    <property type="entry name" value="PRC_RimM"/>
    <property type="match status" value="1"/>
</dbReference>
<dbReference type="Pfam" id="PF01782">
    <property type="entry name" value="RimM"/>
    <property type="match status" value="1"/>
</dbReference>
<dbReference type="SUPFAM" id="SSF50346">
    <property type="entry name" value="PRC-barrel domain"/>
    <property type="match status" value="1"/>
</dbReference>
<dbReference type="SUPFAM" id="SSF50447">
    <property type="entry name" value="Translation proteins"/>
    <property type="match status" value="1"/>
</dbReference>
<proteinExistence type="inferred from homology"/>
<feature type="chain" id="PRO_1000074043" description="Ribosome maturation factor RimM">
    <location>
        <begin position="1"/>
        <end position="176"/>
    </location>
</feature>
<feature type="domain" description="PRC barrel" evidence="1">
    <location>
        <begin position="97"/>
        <end position="176"/>
    </location>
</feature>
<name>RIMM_SHESH</name>
<protein>
    <recommendedName>
        <fullName evidence="1">Ribosome maturation factor RimM</fullName>
    </recommendedName>
</protein>